<feature type="chain" id="PRO_1000079114" description="Molybdenum cofactor guanylyltransferase">
    <location>
        <begin position="1"/>
        <end position="200"/>
    </location>
</feature>
<feature type="binding site" evidence="1">
    <location>
        <begin position="10"/>
        <end position="12"/>
    </location>
    <ligand>
        <name>GTP</name>
        <dbReference type="ChEBI" id="CHEBI:37565"/>
    </ligand>
</feature>
<feature type="binding site" evidence="1">
    <location>
        <position position="23"/>
    </location>
    <ligand>
        <name>GTP</name>
        <dbReference type="ChEBI" id="CHEBI:37565"/>
    </ligand>
</feature>
<feature type="binding site" evidence="1">
    <location>
        <position position="51"/>
    </location>
    <ligand>
        <name>GTP</name>
        <dbReference type="ChEBI" id="CHEBI:37565"/>
    </ligand>
</feature>
<feature type="binding site" evidence="1">
    <location>
        <position position="69"/>
    </location>
    <ligand>
        <name>GTP</name>
        <dbReference type="ChEBI" id="CHEBI:37565"/>
    </ligand>
</feature>
<feature type="binding site" evidence="1">
    <location>
        <position position="99"/>
    </location>
    <ligand>
        <name>GTP</name>
        <dbReference type="ChEBI" id="CHEBI:37565"/>
    </ligand>
</feature>
<feature type="binding site" evidence="1">
    <location>
        <position position="99"/>
    </location>
    <ligand>
        <name>Mg(2+)</name>
        <dbReference type="ChEBI" id="CHEBI:18420"/>
    </ligand>
</feature>
<gene>
    <name evidence="1" type="primary">mobA</name>
    <name type="ordered locus">Spea_4097</name>
</gene>
<sequence>MAAQVDAVILAGGMARRMGGNDKGLVELLNRPMIEHAIERIKPQVKEILINANRNQNRYSEFGFKVFSDQDSGYLGPLAGMITAMSNTDAEYLLVVPCDCPLLPTDLVARMLAKLTAEDAELAVASDGKREQPVVMLLKPSLRESMKAFLDAGERKIDFWYAKHHYVVAEFSDQPNAFVNVNTPEQKQQLGEAIANEENH</sequence>
<name>MOBA_SHEPA</name>
<organism>
    <name type="scientific">Shewanella pealeana (strain ATCC 700345 / ANG-SQ1)</name>
    <dbReference type="NCBI Taxonomy" id="398579"/>
    <lineage>
        <taxon>Bacteria</taxon>
        <taxon>Pseudomonadati</taxon>
        <taxon>Pseudomonadota</taxon>
        <taxon>Gammaproteobacteria</taxon>
        <taxon>Alteromonadales</taxon>
        <taxon>Shewanellaceae</taxon>
        <taxon>Shewanella</taxon>
    </lineage>
</organism>
<evidence type="ECO:0000255" key="1">
    <source>
        <dbReference type="HAMAP-Rule" id="MF_00316"/>
    </source>
</evidence>
<protein>
    <recommendedName>
        <fullName evidence="1">Molybdenum cofactor guanylyltransferase</fullName>
        <shortName evidence="1">MoCo guanylyltransferase</shortName>
        <ecNumber evidence="1">2.7.7.77</ecNumber>
    </recommendedName>
    <alternativeName>
        <fullName evidence="1">GTP:molybdopterin guanylyltransferase</fullName>
    </alternativeName>
    <alternativeName>
        <fullName evidence="1">Mo-MPT guanylyltransferase</fullName>
    </alternativeName>
    <alternativeName>
        <fullName evidence="1">Molybdopterin guanylyltransferase</fullName>
    </alternativeName>
    <alternativeName>
        <fullName evidence="1">Molybdopterin-guanine dinucleotide synthase</fullName>
        <shortName evidence="1">MGD synthase</shortName>
    </alternativeName>
</protein>
<reference key="1">
    <citation type="submission" date="2007-10" db="EMBL/GenBank/DDBJ databases">
        <title>Complete sequence of Shewanella pealeana ATCC 700345.</title>
        <authorList>
            <consortium name="US DOE Joint Genome Institute"/>
            <person name="Copeland A."/>
            <person name="Lucas S."/>
            <person name="Lapidus A."/>
            <person name="Barry K."/>
            <person name="Glavina del Rio T."/>
            <person name="Dalin E."/>
            <person name="Tice H."/>
            <person name="Pitluck S."/>
            <person name="Chertkov O."/>
            <person name="Brettin T."/>
            <person name="Bruce D."/>
            <person name="Detter J.C."/>
            <person name="Han C."/>
            <person name="Schmutz J."/>
            <person name="Larimer F."/>
            <person name="Land M."/>
            <person name="Hauser L."/>
            <person name="Kyrpides N."/>
            <person name="Kim E."/>
            <person name="Zhao J.-S.Z."/>
            <person name="Manno D."/>
            <person name="Hawari J."/>
            <person name="Richardson P."/>
        </authorList>
    </citation>
    <scope>NUCLEOTIDE SEQUENCE [LARGE SCALE GENOMIC DNA]</scope>
    <source>
        <strain>ATCC 700345 / ANG-SQ1</strain>
    </source>
</reference>
<comment type="function">
    <text evidence="1">Transfers a GMP moiety from GTP to Mo-molybdopterin (Mo-MPT) cofactor (Moco or molybdenum cofactor) to form Mo-molybdopterin guanine dinucleotide (Mo-MGD) cofactor.</text>
</comment>
<comment type="catalytic activity">
    <reaction evidence="1">
        <text>Mo-molybdopterin + GTP + H(+) = Mo-molybdopterin guanine dinucleotide + diphosphate</text>
        <dbReference type="Rhea" id="RHEA:34243"/>
        <dbReference type="ChEBI" id="CHEBI:15378"/>
        <dbReference type="ChEBI" id="CHEBI:33019"/>
        <dbReference type="ChEBI" id="CHEBI:37565"/>
        <dbReference type="ChEBI" id="CHEBI:71302"/>
        <dbReference type="ChEBI" id="CHEBI:71310"/>
        <dbReference type="EC" id="2.7.7.77"/>
    </reaction>
</comment>
<comment type="cofactor">
    <cofactor evidence="1">
        <name>Mg(2+)</name>
        <dbReference type="ChEBI" id="CHEBI:18420"/>
    </cofactor>
</comment>
<comment type="subunit">
    <text evidence="1">Monomer.</text>
</comment>
<comment type="subcellular location">
    <subcellularLocation>
        <location evidence="1">Cytoplasm</location>
    </subcellularLocation>
</comment>
<comment type="domain">
    <text evidence="1">The N-terminal domain determines nucleotide recognition and specific binding, while the C-terminal domain determines the specific binding to the target protein.</text>
</comment>
<comment type="similarity">
    <text evidence="1">Belongs to the MobA family.</text>
</comment>
<keyword id="KW-0963">Cytoplasm</keyword>
<keyword id="KW-0342">GTP-binding</keyword>
<keyword id="KW-0460">Magnesium</keyword>
<keyword id="KW-0479">Metal-binding</keyword>
<keyword id="KW-0501">Molybdenum cofactor biosynthesis</keyword>
<keyword id="KW-0547">Nucleotide-binding</keyword>
<keyword id="KW-1185">Reference proteome</keyword>
<keyword id="KW-0808">Transferase</keyword>
<accession>A8HA20</accession>
<proteinExistence type="inferred from homology"/>
<dbReference type="EC" id="2.7.7.77" evidence="1"/>
<dbReference type="EMBL" id="CP000851">
    <property type="protein sequence ID" value="ABV89407.1"/>
    <property type="molecule type" value="Genomic_DNA"/>
</dbReference>
<dbReference type="RefSeq" id="WP_012157285.1">
    <property type="nucleotide sequence ID" value="NC_009901.1"/>
</dbReference>
<dbReference type="SMR" id="A8HA20"/>
<dbReference type="STRING" id="398579.Spea_4097"/>
<dbReference type="KEGG" id="spl:Spea_4097"/>
<dbReference type="eggNOG" id="COG0746">
    <property type="taxonomic scope" value="Bacteria"/>
</dbReference>
<dbReference type="HOGENOM" id="CLU_055597_5_1_6"/>
<dbReference type="OrthoDB" id="9788394at2"/>
<dbReference type="Proteomes" id="UP000002608">
    <property type="component" value="Chromosome"/>
</dbReference>
<dbReference type="GO" id="GO:0005737">
    <property type="term" value="C:cytoplasm"/>
    <property type="evidence" value="ECO:0007669"/>
    <property type="project" value="UniProtKB-SubCell"/>
</dbReference>
<dbReference type="GO" id="GO:0005525">
    <property type="term" value="F:GTP binding"/>
    <property type="evidence" value="ECO:0007669"/>
    <property type="project" value="UniProtKB-UniRule"/>
</dbReference>
<dbReference type="GO" id="GO:0046872">
    <property type="term" value="F:metal ion binding"/>
    <property type="evidence" value="ECO:0007669"/>
    <property type="project" value="UniProtKB-KW"/>
</dbReference>
<dbReference type="GO" id="GO:0061603">
    <property type="term" value="F:molybdenum cofactor guanylyltransferase activity"/>
    <property type="evidence" value="ECO:0007669"/>
    <property type="project" value="UniProtKB-EC"/>
</dbReference>
<dbReference type="GO" id="GO:1902758">
    <property type="term" value="P:bis(molybdopterin guanine dinucleotide)molybdenum biosynthetic process"/>
    <property type="evidence" value="ECO:0007669"/>
    <property type="project" value="TreeGrafter"/>
</dbReference>
<dbReference type="CDD" id="cd02503">
    <property type="entry name" value="MobA"/>
    <property type="match status" value="1"/>
</dbReference>
<dbReference type="Gene3D" id="3.90.550.10">
    <property type="entry name" value="Spore Coat Polysaccharide Biosynthesis Protein SpsA, Chain A"/>
    <property type="match status" value="1"/>
</dbReference>
<dbReference type="HAMAP" id="MF_00316">
    <property type="entry name" value="MobA"/>
    <property type="match status" value="1"/>
</dbReference>
<dbReference type="InterPro" id="IPR025877">
    <property type="entry name" value="MobA-like_NTP_Trfase"/>
</dbReference>
<dbReference type="InterPro" id="IPR013482">
    <property type="entry name" value="Molybde_CF_guanTrfase"/>
</dbReference>
<dbReference type="InterPro" id="IPR029044">
    <property type="entry name" value="Nucleotide-diphossugar_trans"/>
</dbReference>
<dbReference type="NCBIfam" id="TIGR02665">
    <property type="entry name" value="molyb_mobA"/>
    <property type="match status" value="1"/>
</dbReference>
<dbReference type="PANTHER" id="PTHR19136">
    <property type="entry name" value="MOLYBDENUM COFACTOR GUANYLYLTRANSFERASE"/>
    <property type="match status" value="1"/>
</dbReference>
<dbReference type="PANTHER" id="PTHR19136:SF81">
    <property type="entry name" value="MOLYBDENUM COFACTOR GUANYLYLTRANSFERASE"/>
    <property type="match status" value="1"/>
</dbReference>
<dbReference type="Pfam" id="PF12804">
    <property type="entry name" value="NTP_transf_3"/>
    <property type="match status" value="1"/>
</dbReference>
<dbReference type="SUPFAM" id="SSF53448">
    <property type="entry name" value="Nucleotide-diphospho-sugar transferases"/>
    <property type="match status" value="1"/>
</dbReference>